<reference key="1">
    <citation type="journal article" date="2008" name="J. Bacteriol.">
        <title>The pangenome structure of Escherichia coli: comparative genomic analysis of E. coli commensal and pathogenic isolates.</title>
        <authorList>
            <person name="Rasko D.A."/>
            <person name="Rosovitz M.J."/>
            <person name="Myers G.S.A."/>
            <person name="Mongodin E.F."/>
            <person name="Fricke W.F."/>
            <person name="Gajer P."/>
            <person name="Crabtree J."/>
            <person name="Sebaihia M."/>
            <person name="Thomson N.R."/>
            <person name="Chaudhuri R."/>
            <person name="Henderson I.R."/>
            <person name="Sperandio V."/>
            <person name="Ravel J."/>
        </authorList>
    </citation>
    <scope>NUCLEOTIDE SEQUENCE [LARGE SCALE GENOMIC DNA]</scope>
    <source>
        <strain>E24377A / ETEC</strain>
    </source>
</reference>
<keyword id="KW-0963">Cytoplasm</keyword>
<keyword id="KW-0378">Hydrolase</keyword>
<keyword id="KW-0540">Nuclease</keyword>
<keyword id="KW-1185">Reference proteome</keyword>
<keyword id="KW-0690">Ribosome biogenesis</keyword>
<comment type="function">
    <text evidence="1">Could be a nuclease involved in processing of the 5'-end of pre-16S rRNA.</text>
</comment>
<comment type="subcellular location">
    <subcellularLocation>
        <location evidence="1">Cytoplasm</location>
    </subcellularLocation>
</comment>
<comment type="similarity">
    <text evidence="1">Belongs to the YqgF nuclease family.</text>
</comment>
<proteinExistence type="inferred from homology"/>
<sequence>MSGTLLAFDFGTKSIGVAVGQRITGTARPLPAIKAQDGTPDWNLIERLLKEWQPDEIIVGLPLNMDGTEQPLTARARKFANRIHGRFGVEVKLHDERLSTVEARSGLFEQGGYRALNKGKVDSASAVIILESYFEQGY</sequence>
<organism>
    <name type="scientific">Escherichia coli O139:H28 (strain E24377A / ETEC)</name>
    <dbReference type="NCBI Taxonomy" id="331111"/>
    <lineage>
        <taxon>Bacteria</taxon>
        <taxon>Pseudomonadati</taxon>
        <taxon>Pseudomonadota</taxon>
        <taxon>Gammaproteobacteria</taxon>
        <taxon>Enterobacterales</taxon>
        <taxon>Enterobacteriaceae</taxon>
        <taxon>Escherichia</taxon>
    </lineage>
</organism>
<feature type="chain" id="PRO_1000061510" description="Putative pre-16S rRNA nuclease">
    <location>
        <begin position="1"/>
        <end position="138"/>
    </location>
</feature>
<gene>
    <name evidence="1" type="primary">yqgF</name>
    <name type="ordered locus">EcE24377A_3292</name>
</gene>
<evidence type="ECO:0000255" key="1">
    <source>
        <dbReference type="HAMAP-Rule" id="MF_00651"/>
    </source>
</evidence>
<protein>
    <recommendedName>
        <fullName evidence="1">Putative pre-16S rRNA nuclease</fullName>
        <ecNumber evidence="1">3.1.-.-</ecNumber>
    </recommendedName>
</protein>
<name>YQGF_ECO24</name>
<accession>A7ZR72</accession>
<dbReference type="EC" id="3.1.-.-" evidence="1"/>
<dbReference type="EMBL" id="CP000800">
    <property type="protein sequence ID" value="ABV20486.1"/>
    <property type="molecule type" value="Genomic_DNA"/>
</dbReference>
<dbReference type="BMRB" id="A7ZR72"/>
<dbReference type="SMR" id="A7ZR72"/>
<dbReference type="KEGG" id="ecw:EcE24377A_3292"/>
<dbReference type="HOGENOM" id="CLU_098240_3_0_6"/>
<dbReference type="Proteomes" id="UP000001122">
    <property type="component" value="Chromosome"/>
</dbReference>
<dbReference type="GO" id="GO:0005829">
    <property type="term" value="C:cytosol"/>
    <property type="evidence" value="ECO:0007669"/>
    <property type="project" value="TreeGrafter"/>
</dbReference>
<dbReference type="GO" id="GO:0004518">
    <property type="term" value="F:nuclease activity"/>
    <property type="evidence" value="ECO:0007669"/>
    <property type="project" value="UniProtKB-KW"/>
</dbReference>
<dbReference type="GO" id="GO:0000967">
    <property type="term" value="P:rRNA 5'-end processing"/>
    <property type="evidence" value="ECO:0007669"/>
    <property type="project" value="UniProtKB-UniRule"/>
</dbReference>
<dbReference type="CDD" id="cd16964">
    <property type="entry name" value="YqgF"/>
    <property type="match status" value="1"/>
</dbReference>
<dbReference type="FunFam" id="3.30.420.140:FF:000002">
    <property type="entry name" value="Putative pre-16S rRNA nuclease"/>
    <property type="match status" value="1"/>
</dbReference>
<dbReference type="Gene3D" id="3.30.420.140">
    <property type="entry name" value="YqgF/RNase H-like domain"/>
    <property type="match status" value="1"/>
</dbReference>
<dbReference type="HAMAP" id="MF_00651">
    <property type="entry name" value="Nuclease_YqgF"/>
    <property type="match status" value="1"/>
</dbReference>
<dbReference type="InterPro" id="IPR012337">
    <property type="entry name" value="RNaseH-like_sf"/>
</dbReference>
<dbReference type="InterPro" id="IPR005227">
    <property type="entry name" value="YqgF"/>
</dbReference>
<dbReference type="InterPro" id="IPR006641">
    <property type="entry name" value="YqgF/RNaseH-like_dom"/>
</dbReference>
<dbReference type="InterPro" id="IPR037027">
    <property type="entry name" value="YqgF/RNaseH-like_dom_sf"/>
</dbReference>
<dbReference type="NCBIfam" id="TIGR00250">
    <property type="entry name" value="RNAse_H_YqgF"/>
    <property type="match status" value="1"/>
</dbReference>
<dbReference type="PANTHER" id="PTHR33317">
    <property type="entry name" value="POLYNUCLEOTIDYL TRANSFERASE, RIBONUCLEASE H-LIKE SUPERFAMILY PROTEIN"/>
    <property type="match status" value="1"/>
</dbReference>
<dbReference type="PANTHER" id="PTHR33317:SF4">
    <property type="entry name" value="POLYNUCLEOTIDYL TRANSFERASE, RIBONUCLEASE H-LIKE SUPERFAMILY PROTEIN"/>
    <property type="match status" value="1"/>
</dbReference>
<dbReference type="Pfam" id="PF03652">
    <property type="entry name" value="RuvX"/>
    <property type="match status" value="1"/>
</dbReference>
<dbReference type="SMART" id="SM00732">
    <property type="entry name" value="YqgFc"/>
    <property type="match status" value="1"/>
</dbReference>
<dbReference type="SUPFAM" id="SSF53098">
    <property type="entry name" value="Ribonuclease H-like"/>
    <property type="match status" value="1"/>
</dbReference>